<reference key="1">
    <citation type="journal article" date="1992" name="EMBO J.">
        <title>The general mitochondrial processing peptidase from potato is an integral part of cytochrome c reductase of the respiratory chain.</title>
        <authorList>
            <person name="Braun H.P."/>
            <person name="Emmermann M."/>
            <person name="Kruft V."/>
            <person name="Schmitz U.K."/>
        </authorList>
    </citation>
    <scope>NUCLEOTIDE SEQUENCE [MRNA]</scope>
    <scope>PROTEIN SEQUENCE OF 270-280 AND 400-419</scope>
    <source>
        <strain>cv. Desiree</strain>
        <tissue>Green leaf</tissue>
    </source>
</reference>
<proteinExistence type="evidence at protein level"/>
<keyword id="KW-0903">Direct protein sequencing</keyword>
<keyword id="KW-0249">Electron transport</keyword>
<keyword id="KW-0472">Membrane</keyword>
<keyword id="KW-0496">Mitochondrion</keyword>
<keyword id="KW-0999">Mitochondrion inner membrane</keyword>
<keyword id="KW-1185">Reference proteome</keyword>
<keyword id="KW-0679">Respiratory chain</keyword>
<keyword id="KW-0809">Transit peptide</keyword>
<keyword id="KW-1278">Translocase</keyword>
<keyword id="KW-0813">Transport</keyword>
<feature type="transit peptide" description="Mitochondrion">
    <location>
        <begin position="1"/>
        <end status="unknown"/>
    </location>
</feature>
<feature type="chain" id="PRO_0000026776" description="Mitochondrial-processing peptidase subunit alpha">
    <location>
        <begin status="unknown"/>
        <end position="504"/>
    </location>
</feature>
<comment type="function">
    <text evidence="1">Substrate recognition and binding subunit of the essential mitochondrial processing protease (MPP), which cleaves the mitochondrial sequence off newly imported precursors proteins.</text>
</comment>
<comment type="function">
    <text>This is a component of the ubiquinol-cytochrome c reductase complex (complex III or cytochrome b-c1 complex), which is part of the mitochondrial respiratory chain. Mediates formation of the complex between cytochromes c and c1.</text>
</comment>
<comment type="catalytic activity">
    <reaction>
        <text>a quinol + 2 Fe(III)-[cytochrome c](out) = a quinone + 2 Fe(II)-[cytochrome c](out) + 2 H(+)(out)</text>
        <dbReference type="Rhea" id="RHEA:11484"/>
        <dbReference type="Rhea" id="RHEA-COMP:10350"/>
        <dbReference type="Rhea" id="RHEA-COMP:14399"/>
        <dbReference type="ChEBI" id="CHEBI:15378"/>
        <dbReference type="ChEBI" id="CHEBI:24646"/>
        <dbReference type="ChEBI" id="CHEBI:29033"/>
        <dbReference type="ChEBI" id="CHEBI:29034"/>
        <dbReference type="ChEBI" id="CHEBI:132124"/>
        <dbReference type="EC" id="7.1.1.8"/>
    </reaction>
</comment>
<comment type="subunit">
    <text evidence="1">Heterodimer of alpha and beta subunits, forming the mitochondrial processing protease (MPP) in which subunit alpha is involved in substrate recognition and binding and subunit beta is the catalytic subunit.</text>
</comment>
<comment type="subcellular location">
    <subcellularLocation>
        <location>Mitochondrion inner membrane</location>
    </subcellularLocation>
</comment>
<comment type="similarity">
    <text evidence="2">Belongs to the peptidase M16 family.</text>
</comment>
<comment type="caution">
    <text evidence="2">Does not seem to have protease activity as it lacks the zinc-binding site.</text>
</comment>
<organism>
    <name type="scientific">Solanum tuberosum</name>
    <name type="common">Potato</name>
    <dbReference type="NCBI Taxonomy" id="4113"/>
    <lineage>
        <taxon>Eukaryota</taxon>
        <taxon>Viridiplantae</taxon>
        <taxon>Streptophyta</taxon>
        <taxon>Embryophyta</taxon>
        <taxon>Tracheophyta</taxon>
        <taxon>Spermatophyta</taxon>
        <taxon>Magnoliopsida</taxon>
        <taxon>eudicotyledons</taxon>
        <taxon>Gunneridae</taxon>
        <taxon>Pentapetalae</taxon>
        <taxon>asterids</taxon>
        <taxon>lamiids</taxon>
        <taxon>Solanales</taxon>
        <taxon>Solanaceae</taxon>
        <taxon>Solanoideae</taxon>
        <taxon>Solaneae</taxon>
        <taxon>Solanum</taxon>
    </lineage>
</organism>
<dbReference type="EC" id="7.1.1.8"/>
<dbReference type="EMBL" id="X66284">
    <property type="protein sequence ID" value="CAA46990.1"/>
    <property type="molecule type" value="mRNA"/>
</dbReference>
<dbReference type="PIR" id="S23558">
    <property type="entry name" value="S23558"/>
</dbReference>
<dbReference type="RefSeq" id="NP_001275168.1">
    <property type="nucleotide sequence ID" value="NM_001288239.1"/>
</dbReference>
<dbReference type="SMR" id="P29677"/>
<dbReference type="FunCoup" id="P29677">
    <property type="interactions" value="3910"/>
</dbReference>
<dbReference type="IntAct" id="P29677">
    <property type="interactions" value="1"/>
</dbReference>
<dbReference type="STRING" id="4113.P29677"/>
<dbReference type="CarbonylDB" id="P29677"/>
<dbReference type="PaxDb" id="4113-PGSC0003DMT400000784"/>
<dbReference type="ProMEX" id="P29677"/>
<dbReference type="EnsemblPlants" id="RHC12H1G0483.2.1">
    <property type="protein sequence ID" value="RHC12H1G0483.2.1"/>
    <property type="gene ID" value="RHC12H1G0483.2"/>
</dbReference>
<dbReference type="GeneID" id="102580877"/>
<dbReference type="Gramene" id="RHC12H1G0483.2.1">
    <property type="protein sequence ID" value="RHC12H1G0483.2.1"/>
    <property type="gene ID" value="RHC12H1G0483.2"/>
</dbReference>
<dbReference type="KEGG" id="sot:102580877"/>
<dbReference type="eggNOG" id="KOG2067">
    <property type="taxonomic scope" value="Eukaryota"/>
</dbReference>
<dbReference type="InParanoid" id="P29677"/>
<dbReference type="OrthoDB" id="10251424at2759"/>
<dbReference type="Proteomes" id="UP000011115">
    <property type="component" value="Unassembled WGS sequence"/>
</dbReference>
<dbReference type="ExpressionAtlas" id="P29677">
    <property type="expression patterns" value="baseline"/>
</dbReference>
<dbReference type="GO" id="GO:0005743">
    <property type="term" value="C:mitochondrial inner membrane"/>
    <property type="evidence" value="ECO:0007669"/>
    <property type="project" value="UniProtKB-SubCell"/>
</dbReference>
<dbReference type="GO" id="GO:0005739">
    <property type="term" value="C:mitochondrion"/>
    <property type="evidence" value="ECO:0000318"/>
    <property type="project" value="GO_Central"/>
</dbReference>
<dbReference type="GO" id="GO:0046872">
    <property type="term" value="F:metal ion binding"/>
    <property type="evidence" value="ECO:0007669"/>
    <property type="project" value="InterPro"/>
</dbReference>
<dbReference type="GO" id="GO:0004222">
    <property type="term" value="F:metalloendopeptidase activity"/>
    <property type="evidence" value="ECO:0007669"/>
    <property type="project" value="InterPro"/>
</dbReference>
<dbReference type="GO" id="GO:0008121">
    <property type="term" value="F:ubiquinol-cytochrome-c reductase activity"/>
    <property type="evidence" value="ECO:0007669"/>
    <property type="project" value="UniProtKB-EC"/>
</dbReference>
<dbReference type="GO" id="GO:0006508">
    <property type="term" value="P:proteolysis"/>
    <property type="evidence" value="ECO:0007669"/>
    <property type="project" value="InterPro"/>
</dbReference>
<dbReference type="FunFam" id="3.30.830.10:FF:000022">
    <property type="entry name" value="mitochondrial-processing peptidase subunit alpha"/>
    <property type="match status" value="1"/>
</dbReference>
<dbReference type="FunFam" id="3.30.830.10:FF:000008">
    <property type="entry name" value="Mitochondrial-processing peptidase subunit beta"/>
    <property type="match status" value="1"/>
</dbReference>
<dbReference type="Gene3D" id="3.30.830.10">
    <property type="entry name" value="Metalloenzyme, LuxS/M16 peptidase-like"/>
    <property type="match status" value="2"/>
</dbReference>
<dbReference type="InterPro" id="IPR011249">
    <property type="entry name" value="Metalloenz_LuxS/M16"/>
</dbReference>
<dbReference type="InterPro" id="IPR050361">
    <property type="entry name" value="MPP/UQCRC_Complex"/>
</dbReference>
<dbReference type="InterPro" id="IPR011765">
    <property type="entry name" value="Pept_M16_N"/>
</dbReference>
<dbReference type="InterPro" id="IPR001431">
    <property type="entry name" value="Pept_M16_Zn_BS"/>
</dbReference>
<dbReference type="InterPro" id="IPR007863">
    <property type="entry name" value="Peptidase_M16_C"/>
</dbReference>
<dbReference type="PANTHER" id="PTHR11851">
    <property type="entry name" value="METALLOPROTEASE"/>
    <property type="match status" value="1"/>
</dbReference>
<dbReference type="PANTHER" id="PTHR11851:SF190">
    <property type="entry name" value="MITOCHONDRIAL-PROCESSING PEPTIDASE SUBUNIT ALPHA"/>
    <property type="match status" value="1"/>
</dbReference>
<dbReference type="Pfam" id="PF00675">
    <property type="entry name" value="Peptidase_M16"/>
    <property type="match status" value="1"/>
</dbReference>
<dbReference type="Pfam" id="PF05193">
    <property type="entry name" value="Peptidase_M16_C"/>
    <property type="match status" value="1"/>
</dbReference>
<dbReference type="SUPFAM" id="SSF63411">
    <property type="entry name" value="LuxS/MPP-like metallohydrolase"/>
    <property type="match status" value="2"/>
</dbReference>
<dbReference type="PROSITE" id="PS00143">
    <property type="entry name" value="INSULINASE"/>
    <property type="match status" value="1"/>
</dbReference>
<name>MPPA_SOLTU</name>
<evidence type="ECO:0000250" key="1">
    <source>
        <dbReference type="UniProtKB" id="P11914"/>
    </source>
</evidence>
<evidence type="ECO:0000305" key="2"/>
<sequence>MYRCASSRLSSLKARQGNRVLTRFSSSAAVATKPSGGLFSWITGDTSSSVTPLDFPLNDVKLSPPLPDYVEPAKTQITTLANGLKVASEASVNPAASIGLYVDCGSIYETPASYGATHLLERMAFKSTLNRSHLRIVREIEAIGGNVTASASREHMIYTYDALKTYVPQMVEMLADCVRNPAFLDWEVKEQLEKVKAEISEYSKNPQHLLLEAVHSAGYAGPYGNSLMATEATINRLNSTVLEEFVAENYTAPRMVLAASGVEHEEFLKVAEPLLSDLPKVATIEEPKPVYVGGDYRCQADAEMTHFALAFEVPGGWMSEKESMTLTVLQMLMGGGGSFSAGGPGKGMYSRLYLRVLNQYPQIHAFSAFSSIYNNTGLFGIQGTTSSDFGPQAVDVAVKELIAVANPSEVDQVQLNRAKQATKSAILMNLESRMVASEDIGRQLLTYGERNPVEHFLKAIDAVSAKDIASVVQKLISSPLTMASYGDVLSLPSYDAVSSRFRSK</sequence>
<gene>
    <name type="primary">MPP</name>
</gene>
<protein>
    <recommendedName>
        <fullName>Mitochondrial-processing peptidase subunit alpha</fullName>
    </recommendedName>
    <alternativeName>
        <fullName>Alpha-MPP</fullName>
    </alternativeName>
    <alternativeName>
        <fullName evidence="2">Inactive zinc metalloprotease alpha</fullName>
    </alternativeName>
    <alternativeName>
        <fullName>Ubiquinol-cytochrome-c reductase subunit II</fullName>
        <ecNumber>7.1.1.8</ecNumber>
    </alternativeName>
</protein>
<accession>P29677</accession>